<gene>
    <name type="primary">gadr-3</name>
    <name type="ORF">F47D12.5</name>
</gene>
<keyword id="KW-0472">Membrane</keyword>
<keyword id="KW-1185">Reference proteome</keyword>
<keyword id="KW-0812">Transmembrane</keyword>
<keyword id="KW-1133">Transmembrane helix</keyword>
<name>GADR3_CAEEL</name>
<dbReference type="EMBL" id="FO080618">
    <property type="protein sequence ID" value="CCD83375.1"/>
    <property type="molecule type" value="Genomic_DNA"/>
</dbReference>
<dbReference type="PIR" id="F88478">
    <property type="entry name" value="F88478"/>
</dbReference>
<dbReference type="RefSeq" id="NP_498378.2">
    <property type="nucleotide sequence ID" value="NM_065977.6"/>
</dbReference>
<dbReference type="SMR" id="Q09562"/>
<dbReference type="BioGRID" id="50688">
    <property type="interactions" value="1"/>
</dbReference>
<dbReference type="DIP" id="DIP-27183N"/>
<dbReference type="FunCoup" id="Q09562">
    <property type="interactions" value="17"/>
</dbReference>
<dbReference type="STRING" id="6239.F47D12.5.1"/>
<dbReference type="PaxDb" id="6239-F47D12.5"/>
<dbReference type="EnsemblMetazoa" id="F47D12.5.1">
    <property type="protein sequence ID" value="F47D12.5.1"/>
    <property type="gene ID" value="WBGene00018561"/>
</dbReference>
<dbReference type="GeneID" id="185933"/>
<dbReference type="KEGG" id="cel:CELE_F47D12.5"/>
<dbReference type="UCSC" id="F47D12.5">
    <property type="organism name" value="c. elegans"/>
</dbReference>
<dbReference type="AGR" id="WB:WBGene00018561"/>
<dbReference type="CTD" id="185933"/>
<dbReference type="WormBase" id="F47D12.5">
    <property type="protein sequence ID" value="CE43720"/>
    <property type="gene ID" value="WBGene00018561"/>
    <property type="gene designation" value="gadr-3"/>
</dbReference>
<dbReference type="eggNOG" id="KOG3665">
    <property type="taxonomic scope" value="Eukaryota"/>
</dbReference>
<dbReference type="GeneTree" id="ENSGT00530000065009"/>
<dbReference type="HOGENOM" id="CLU_022099_0_0_1"/>
<dbReference type="InParanoid" id="Q09562"/>
<dbReference type="OMA" id="AAINCHI"/>
<dbReference type="OrthoDB" id="5783533at2759"/>
<dbReference type="PhylomeDB" id="Q09562"/>
<dbReference type="PRO" id="PR:Q09562"/>
<dbReference type="Proteomes" id="UP000001940">
    <property type="component" value="Chromosome III"/>
</dbReference>
<dbReference type="Bgee" id="WBGene00018561">
    <property type="expression patterns" value="Expressed in embryo and 3 other cell types or tissues"/>
</dbReference>
<dbReference type="GO" id="GO:0031462">
    <property type="term" value="C:Cul2-RING ubiquitin ligase complex"/>
    <property type="evidence" value="ECO:0000318"/>
    <property type="project" value="GO_Central"/>
</dbReference>
<dbReference type="GO" id="GO:0016020">
    <property type="term" value="C:membrane"/>
    <property type="evidence" value="ECO:0007669"/>
    <property type="project" value="UniProtKB-SubCell"/>
</dbReference>
<dbReference type="FunFam" id="3.80.10.10:FF:001202">
    <property type="entry name" value="Gastrulation-defective protein 3"/>
    <property type="match status" value="1"/>
</dbReference>
<dbReference type="Gene3D" id="3.80.10.10">
    <property type="entry name" value="Ribonuclease Inhibitor"/>
    <property type="match status" value="1"/>
</dbReference>
<dbReference type="InterPro" id="IPR016024">
    <property type="entry name" value="ARM-type_fold"/>
</dbReference>
<dbReference type="InterPro" id="IPR032675">
    <property type="entry name" value="LRR_dom_sf"/>
</dbReference>
<dbReference type="InterPro" id="IPR056845">
    <property type="entry name" value="LRR_Zer-1"/>
</dbReference>
<dbReference type="InterPro" id="IPR051341">
    <property type="entry name" value="Zyg-11_UBL_adapter"/>
</dbReference>
<dbReference type="PANTHER" id="PTHR12904">
    <property type="match status" value="1"/>
</dbReference>
<dbReference type="PANTHER" id="PTHR12904:SF28">
    <property type="entry name" value="ATP SYNTHASE SUBUNIT ALPHA-RELATED"/>
    <property type="match status" value="1"/>
</dbReference>
<dbReference type="Pfam" id="PF25013">
    <property type="entry name" value="LRR_Zer-1"/>
    <property type="match status" value="1"/>
</dbReference>
<dbReference type="SUPFAM" id="SSF48371">
    <property type="entry name" value="ARM repeat"/>
    <property type="match status" value="1"/>
</dbReference>
<dbReference type="SUPFAM" id="SSF52047">
    <property type="entry name" value="RNI-like"/>
    <property type="match status" value="1"/>
</dbReference>
<accession>Q09562</accession>
<proteinExistence type="predicted"/>
<reference key="1">
    <citation type="journal article" date="1998" name="Science">
        <title>Genome sequence of the nematode C. elegans: a platform for investigating biology.</title>
        <authorList>
            <consortium name="The C. elegans sequencing consortium"/>
        </authorList>
    </citation>
    <scope>NUCLEOTIDE SEQUENCE [LARGE SCALE GENOMIC DNA]</scope>
    <source>
        <strain>Bristol N2</strain>
    </source>
</reference>
<comment type="subcellular location">
    <subcellularLocation>
        <location evidence="2">Membrane</location>
        <topology evidence="2">Single-pass membrane protein</topology>
    </subcellularLocation>
</comment>
<feature type="chain" id="PRO_0000065352" description="Gastrulation-defective protein 3">
    <location>
        <begin position="1"/>
        <end position="710"/>
    </location>
</feature>
<feature type="transmembrane region" description="Helical" evidence="1">
    <location>
        <begin position="597"/>
        <end position="615"/>
    </location>
</feature>
<sequence length="710" mass="81889">MINALSCIATEKVAHYINDGIYRNLKYKLDSKSSDQVYSKLLKISRGLIHEYNHEIGQRLELRNVDYGKFKIDRNTVMVLKKHCLESLGIGDLDYIGYYYRDLIDDNTIDIFELLKAILNNETRRNLHYLDIKGSHAFSKKWTKNIGTILPVLRSLIICGRHLQSDDFQQLCESIPNLTYLDISETNVPNISGISSLKNLESLIMRSVELECFEQFVDLFNLTGLRILDVSRSMYKHDTKIINQYVQSNKVLKELRFLECSGTDINKNLLEQILNSHDNLQQVAAINCHIRSLSLHHEVFLLNTATLTSSLKSLTHYLGVHRISSVERVLENMLHLFPKYDPDLDNRFDFSECVKIIINSALKIESSLGIQGYGTLCLWHIARNQDARFQPFDLYQLVCKLLDGVYNNGRLFIATKDFNISLWRTIESLLKLLESSLKPMSYERVCRIAGLCISRNEVDDEMKTRAIPIFATYIKRISSQSVYYIDFNHKLMPKIILHLKKSIELRKTYWITFCLDILTQITQNSADACEKLAECEEMNVLLECFGNLTKASDHLKILKILKNVLLELTDKNVKHVAIDARISVLQERLDEWDDERAYYVFTVLALIISNFPTIVNREPANSLIRECFPEISNVIKIPVSDSKIYVKNGILKKILKDSREDGSLLWALLVIKSSMEQDKSFVNLLTTEMSNLNTNSEIIMNMKAEIKNLI</sequence>
<protein>
    <recommendedName>
        <fullName>Gastrulation-defective protein 3</fullName>
    </recommendedName>
</protein>
<organism>
    <name type="scientific">Caenorhabditis elegans</name>
    <dbReference type="NCBI Taxonomy" id="6239"/>
    <lineage>
        <taxon>Eukaryota</taxon>
        <taxon>Metazoa</taxon>
        <taxon>Ecdysozoa</taxon>
        <taxon>Nematoda</taxon>
        <taxon>Chromadorea</taxon>
        <taxon>Rhabditida</taxon>
        <taxon>Rhabditina</taxon>
        <taxon>Rhabditomorpha</taxon>
        <taxon>Rhabditoidea</taxon>
        <taxon>Rhabditidae</taxon>
        <taxon>Peloderinae</taxon>
        <taxon>Caenorhabditis</taxon>
    </lineage>
</organism>
<evidence type="ECO:0000255" key="1"/>
<evidence type="ECO:0000305" key="2"/>